<feature type="chain" id="PRO_0000383410" description="L-lactate dehydrogenase">
    <location>
        <begin position="1"/>
        <end position="381"/>
    </location>
</feature>
<feature type="domain" description="FMN hydroxy acid dehydrogenase" evidence="1">
    <location>
        <begin position="1"/>
        <end position="380"/>
    </location>
</feature>
<feature type="active site" description="Proton acceptor" evidence="1">
    <location>
        <position position="275"/>
    </location>
</feature>
<feature type="binding site" evidence="1">
    <location>
        <position position="24"/>
    </location>
    <ligand>
        <name>substrate</name>
    </ligand>
</feature>
<feature type="binding site" evidence="1">
    <location>
        <position position="106"/>
    </location>
    <ligand>
        <name>FMN</name>
        <dbReference type="ChEBI" id="CHEBI:58210"/>
    </ligand>
</feature>
<feature type="binding site" evidence="1">
    <location>
        <position position="127"/>
    </location>
    <ligand>
        <name>FMN</name>
        <dbReference type="ChEBI" id="CHEBI:58210"/>
    </ligand>
</feature>
<feature type="binding site" evidence="1">
    <location>
        <position position="129"/>
    </location>
    <ligand>
        <name>substrate</name>
    </ligand>
</feature>
<feature type="binding site" evidence="1">
    <location>
        <position position="155"/>
    </location>
    <ligand>
        <name>FMN</name>
        <dbReference type="ChEBI" id="CHEBI:58210"/>
    </ligand>
</feature>
<feature type="binding site" evidence="1">
    <location>
        <position position="164"/>
    </location>
    <ligand>
        <name>substrate</name>
    </ligand>
</feature>
<feature type="binding site" evidence="1">
    <location>
        <position position="251"/>
    </location>
    <ligand>
        <name>FMN</name>
        <dbReference type="ChEBI" id="CHEBI:58210"/>
    </ligand>
</feature>
<feature type="binding site" evidence="1">
    <location>
        <position position="278"/>
    </location>
    <ligand>
        <name>substrate</name>
    </ligand>
</feature>
<feature type="binding site" evidence="1">
    <location>
        <begin position="306"/>
        <end position="330"/>
    </location>
    <ligand>
        <name>FMN</name>
        <dbReference type="ChEBI" id="CHEBI:58210"/>
    </ligand>
</feature>
<sequence length="381" mass="41782">MIISSTNDYREAARRRVPPFMFHYADGGSFSERTLERNVTDLADLALRQRVLKDMSQLDTEIELFGEKLAMPAVLAPVGACGMYARRGEVQAAQAAENKGIPFTLSTVSICPIEEVTAAIKRPMWFQLYVLKDRGFMKHVLERAKAAGCSTLVFTVDMPTPGARYRDRHSGMSGDYKEIRRALQAVTHPFWAWDVGIKGKPHTLGNVSAYTGKAVGLDDYVVWLGENFDPSISWKDLEWIRDFWDGPMVIKGILDPEDAKDAVRFGADGIVVSNHGGRQLDGALSSARALPSIADAVKGDIKILADSGIRNGLDIVRMLALGADATMLGRAFVYALGAAGKAGVENMLDIFKKEMHVAMTLTSNQKISDITRDALVDLSKL</sequence>
<accession>B0BTC7</accession>
<reference key="1">
    <citation type="journal article" date="2008" name="PLoS ONE">
        <title>Genome biology of Actinobacillus pleuropneumoniae JL03, an isolate of serotype 3 prevalent in China.</title>
        <authorList>
            <person name="Xu Z."/>
            <person name="Zhou Y."/>
            <person name="Li L."/>
            <person name="Zhou R."/>
            <person name="Xiao S."/>
            <person name="Wan Y."/>
            <person name="Zhang S."/>
            <person name="Wang K."/>
            <person name="Li W."/>
            <person name="Li L."/>
            <person name="Jin H."/>
            <person name="Kang M."/>
            <person name="Dalai B."/>
            <person name="Li T."/>
            <person name="Liu L."/>
            <person name="Cheng Y."/>
            <person name="Zhang L."/>
            <person name="Xu T."/>
            <person name="Zheng H."/>
            <person name="Pu S."/>
            <person name="Wang B."/>
            <person name="Gu W."/>
            <person name="Zhang X.L."/>
            <person name="Zhu G.-F."/>
            <person name="Wang S."/>
            <person name="Zhao G.-P."/>
            <person name="Chen H."/>
        </authorList>
    </citation>
    <scope>NUCLEOTIDE SEQUENCE [LARGE SCALE GENOMIC DNA]</scope>
    <source>
        <strain>JL03</strain>
    </source>
</reference>
<evidence type="ECO:0000255" key="1">
    <source>
        <dbReference type="HAMAP-Rule" id="MF_01559"/>
    </source>
</evidence>
<comment type="function">
    <text evidence="1">Catalyzes the conversion of L-lactate to pyruvate. Is coupled to the respiratory chain.</text>
</comment>
<comment type="catalytic activity">
    <reaction evidence="1">
        <text>(S)-lactate + A = pyruvate + AH2</text>
        <dbReference type="Rhea" id="RHEA:45816"/>
        <dbReference type="ChEBI" id="CHEBI:13193"/>
        <dbReference type="ChEBI" id="CHEBI:15361"/>
        <dbReference type="ChEBI" id="CHEBI:16651"/>
        <dbReference type="ChEBI" id="CHEBI:17499"/>
    </reaction>
</comment>
<comment type="cofactor">
    <cofactor evidence="1">
        <name>FMN</name>
        <dbReference type="ChEBI" id="CHEBI:58210"/>
    </cofactor>
</comment>
<comment type="subcellular location">
    <subcellularLocation>
        <location evidence="1">Cell inner membrane</location>
        <topology evidence="1">Peripheral membrane protein</topology>
    </subcellularLocation>
</comment>
<comment type="similarity">
    <text evidence="1">Belongs to the FMN-dependent alpha-hydroxy acid dehydrogenase family.</text>
</comment>
<proteinExistence type="inferred from homology"/>
<protein>
    <recommendedName>
        <fullName evidence="1">L-lactate dehydrogenase</fullName>
        <ecNumber evidence="1">1.1.-.-</ecNumber>
    </recommendedName>
</protein>
<keyword id="KW-0997">Cell inner membrane</keyword>
<keyword id="KW-1003">Cell membrane</keyword>
<keyword id="KW-0285">Flavoprotein</keyword>
<keyword id="KW-0288">FMN</keyword>
<keyword id="KW-0472">Membrane</keyword>
<keyword id="KW-0560">Oxidoreductase</keyword>
<dbReference type="EC" id="1.1.-.-" evidence="1"/>
<dbReference type="EMBL" id="CP000687">
    <property type="protein sequence ID" value="ABY70441.1"/>
    <property type="molecule type" value="Genomic_DNA"/>
</dbReference>
<dbReference type="RefSeq" id="WP_012263420.1">
    <property type="nucleotide sequence ID" value="NC_010278.1"/>
</dbReference>
<dbReference type="SMR" id="B0BTC7"/>
<dbReference type="KEGG" id="apj:APJL_1891"/>
<dbReference type="HOGENOM" id="CLU_020639_0_0_6"/>
<dbReference type="Proteomes" id="UP000008547">
    <property type="component" value="Chromosome"/>
</dbReference>
<dbReference type="GO" id="GO:0005886">
    <property type="term" value="C:plasma membrane"/>
    <property type="evidence" value="ECO:0007669"/>
    <property type="project" value="UniProtKB-SubCell"/>
</dbReference>
<dbReference type="GO" id="GO:0010181">
    <property type="term" value="F:FMN binding"/>
    <property type="evidence" value="ECO:0007669"/>
    <property type="project" value="InterPro"/>
</dbReference>
<dbReference type="GO" id="GO:0004459">
    <property type="term" value="F:L-lactate dehydrogenase activity"/>
    <property type="evidence" value="ECO:0007669"/>
    <property type="project" value="UniProtKB-UniRule"/>
</dbReference>
<dbReference type="GO" id="GO:0009060">
    <property type="term" value="P:aerobic respiration"/>
    <property type="evidence" value="ECO:0007669"/>
    <property type="project" value="TreeGrafter"/>
</dbReference>
<dbReference type="GO" id="GO:0006089">
    <property type="term" value="P:lactate metabolic process"/>
    <property type="evidence" value="ECO:0007669"/>
    <property type="project" value="UniProtKB-UniRule"/>
</dbReference>
<dbReference type="CDD" id="cd02809">
    <property type="entry name" value="alpha_hydroxyacid_oxid_FMN"/>
    <property type="match status" value="1"/>
</dbReference>
<dbReference type="FunFam" id="3.20.20.70:FF:000029">
    <property type="entry name" value="L-lactate dehydrogenase"/>
    <property type="match status" value="1"/>
</dbReference>
<dbReference type="Gene3D" id="3.20.20.70">
    <property type="entry name" value="Aldolase class I"/>
    <property type="match status" value="1"/>
</dbReference>
<dbReference type="HAMAP" id="MF_01559">
    <property type="entry name" value="L_lact_dehydr"/>
    <property type="match status" value="1"/>
</dbReference>
<dbReference type="InterPro" id="IPR013785">
    <property type="entry name" value="Aldolase_TIM"/>
</dbReference>
<dbReference type="InterPro" id="IPR012133">
    <property type="entry name" value="Alpha-hydoxy_acid_DH_FMN"/>
</dbReference>
<dbReference type="InterPro" id="IPR000262">
    <property type="entry name" value="FMN-dep_DH"/>
</dbReference>
<dbReference type="InterPro" id="IPR037396">
    <property type="entry name" value="FMN_HAD"/>
</dbReference>
<dbReference type="InterPro" id="IPR008259">
    <property type="entry name" value="FMN_hydac_DH_AS"/>
</dbReference>
<dbReference type="InterPro" id="IPR020920">
    <property type="entry name" value="LldD"/>
</dbReference>
<dbReference type="NCBIfam" id="NF033901">
    <property type="entry name" value="L_lactate_LldD"/>
    <property type="match status" value="1"/>
</dbReference>
<dbReference type="NCBIfam" id="NF008398">
    <property type="entry name" value="PRK11197.1"/>
    <property type="match status" value="1"/>
</dbReference>
<dbReference type="PANTHER" id="PTHR10578:SF85">
    <property type="entry name" value="L-LACTATE DEHYDROGENASE"/>
    <property type="match status" value="1"/>
</dbReference>
<dbReference type="PANTHER" id="PTHR10578">
    <property type="entry name" value="S -2-HYDROXY-ACID OXIDASE-RELATED"/>
    <property type="match status" value="1"/>
</dbReference>
<dbReference type="Pfam" id="PF01070">
    <property type="entry name" value="FMN_dh"/>
    <property type="match status" value="1"/>
</dbReference>
<dbReference type="PIRSF" id="PIRSF000138">
    <property type="entry name" value="Al-hdrx_acd_dh"/>
    <property type="match status" value="1"/>
</dbReference>
<dbReference type="SUPFAM" id="SSF51395">
    <property type="entry name" value="FMN-linked oxidoreductases"/>
    <property type="match status" value="1"/>
</dbReference>
<dbReference type="PROSITE" id="PS00557">
    <property type="entry name" value="FMN_HYDROXY_ACID_DH_1"/>
    <property type="match status" value="1"/>
</dbReference>
<dbReference type="PROSITE" id="PS51349">
    <property type="entry name" value="FMN_HYDROXY_ACID_DH_2"/>
    <property type="match status" value="1"/>
</dbReference>
<gene>
    <name evidence="1" type="primary">lldD</name>
    <name type="ordered locus">APJL_1891</name>
</gene>
<name>LLDD_ACTPJ</name>
<organism>
    <name type="scientific">Actinobacillus pleuropneumoniae serotype 3 (strain JL03)</name>
    <dbReference type="NCBI Taxonomy" id="434271"/>
    <lineage>
        <taxon>Bacteria</taxon>
        <taxon>Pseudomonadati</taxon>
        <taxon>Pseudomonadota</taxon>
        <taxon>Gammaproteobacteria</taxon>
        <taxon>Pasteurellales</taxon>
        <taxon>Pasteurellaceae</taxon>
        <taxon>Actinobacillus</taxon>
    </lineage>
</organism>